<comment type="function">
    <text evidence="1 6">Palmitoyl acyltransferase.</text>
</comment>
<comment type="catalytic activity">
    <reaction>
        <text>L-cysteinyl-[protein] + hexadecanoyl-CoA = S-hexadecanoyl-L-cysteinyl-[protein] + CoA</text>
        <dbReference type="Rhea" id="RHEA:36683"/>
        <dbReference type="Rhea" id="RHEA-COMP:10131"/>
        <dbReference type="Rhea" id="RHEA-COMP:11032"/>
        <dbReference type="ChEBI" id="CHEBI:29950"/>
        <dbReference type="ChEBI" id="CHEBI:57287"/>
        <dbReference type="ChEBI" id="CHEBI:57379"/>
        <dbReference type="ChEBI" id="CHEBI:74151"/>
        <dbReference type="EC" id="2.3.1.225"/>
    </reaction>
</comment>
<comment type="subcellular location">
    <subcellularLocation>
        <location evidence="7">Cytoplasmic vesicle membrane</location>
        <topology evidence="7">Multi-pass membrane protein</topology>
    </subcellularLocation>
</comment>
<comment type="tissue specificity">
    <text evidence="5">Expressed in flowers and pollen.</text>
</comment>
<comment type="domain">
    <text evidence="1">The DHHC domain is required for palmitoyltransferase activity.</text>
</comment>
<comment type="similarity">
    <text evidence="7">Belongs to the DHHC palmitoyltransferase family.</text>
</comment>
<comment type="sequence caution" evidence="7">
    <conflict type="erroneous gene model prediction">
        <sequence resource="EMBL-CDS" id="AAD12012"/>
    </conflict>
</comment>
<accession>O80685</accession>
<accession>F4IJ24</accession>
<organism>
    <name type="scientific">Arabidopsis thaliana</name>
    <name type="common">Mouse-ear cress</name>
    <dbReference type="NCBI Taxonomy" id="3702"/>
    <lineage>
        <taxon>Eukaryota</taxon>
        <taxon>Viridiplantae</taxon>
        <taxon>Streptophyta</taxon>
        <taxon>Embryophyta</taxon>
        <taxon>Tracheophyta</taxon>
        <taxon>Spermatophyta</taxon>
        <taxon>Magnoliopsida</taxon>
        <taxon>eudicotyledons</taxon>
        <taxon>Gunneridae</taxon>
        <taxon>Pentapetalae</taxon>
        <taxon>rosids</taxon>
        <taxon>malvids</taxon>
        <taxon>Brassicales</taxon>
        <taxon>Brassicaceae</taxon>
        <taxon>Camelineae</taxon>
        <taxon>Arabidopsis</taxon>
    </lineage>
</organism>
<protein>
    <recommendedName>
        <fullName>Probable protein S-acyltransferase 2</fullName>
        <ecNumber>2.3.1.225</ecNumber>
    </recommendedName>
    <alternativeName>
        <fullName>Probable palmitoyltransferase At2g40990</fullName>
    </alternativeName>
    <alternativeName>
        <fullName>Zinc finger DHHC domain-containing protein At2g40990</fullName>
    </alternativeName>
</protein>
<evidence type="ECO:0000250" key="1"/>
<evidence type="ECO:0000250" key="2">
    <source>
        <dbReference type="UniProtKB" id="Q9M306"/>
    </source>
</evidence>
<evidence type="ECO:0000255" key="3"/>
<evidence type="ECO:0000255" key="4">
    <source>
        <dbReference type="PROSITE-ProRule" id="PRU00067"/>
    </source>
</evidence>
<evidence type="ECO:0000269" key="5">
    <source>
    </source>
</evidence>
<evidence type="ECO:0000269" key="6">
    <source ref="3"/>
</evidence>
<evidence type="ECO:0000305" key="7"/>
<name>ZDHC4_ARATH</name>
<keyword id="KW-0012">Acyltransferase</keyword>
<keyword id="KW-0968">Cytoplasmic vesicle</keyword>
<keyword id="KW-0449">Lipoprotein</keyword>
<keyword id="KW-0472">Membrane</keyword>
<keyword id="KW-0564">Palmitate</keyword>
<keyword id="KW-0597">Phosphoprotein</keyword>
<keyword id="KW-1185">Reference proteome</keyword>
<keyword id="KW-0808">Transferase</keyword>
<keyword id="KW-0812">Transmembrane</keyword>
<keyword id="KW-1133">Transmembrane helix</keyword>
<dbReference type="EC" id="2.3.1.225"/>
<dbReference type="EMBL" id="AC004261">
    <property type="protein sequence ID" value="AAD12012.1"/>
    <property type="status" value="ALT_SEQ"/>
    <property type="molecule type" value="Genomic_DNA"/>
</dbReference>
<dbReference type="EMBL" id="CP002685">
    <property type="protein sequence ID" value="AEC09910.1"/>
    <property type="molecule type" value="Genomic_DNA"/>
</dbReference>
<dbReference type="PIR" id="T02120">
    <property type="entry name" value="T02120"/>
</dbReference>
<dbReference type="RefSeq" id="NP_181632.5">
    <property type="nucleotide sequence ID" value="NM_129664.6"/>
</dbReference>
<dbReference type="SMR" id="O80685"/>
<dbReference type="FunCoup" id="O80685">
    <property type="interactions" value="1670"/>
</dbReference>
<dbReference type="STRING" id="3702.O80685"/>
<dbReference type="iPTMnet" id="O80685"/>
<dbReference type="PaxDb" id="3702-AT2G40990.1"/>
<dbReference type="ProteomicsDB" id="242932"/>
<dbReference type="EnsemblPlants" id="AT2G40990.1">
    <property type="protein sequence ID" value="AT2G40990.1"/>
    <property type="gene ID" value="AT2G40990"/>
</dbReference>
<dbReference type="GeneID" id="818699"/>
<dbReference type="Gramene" id="AT2G40990.1">
    <property type="protein sequence ID" value="AT2G40990.1"/>
    <property type="gene ID" value="AT2G40990"/>
</dbReference>
<dbReference type="KEGG" id="ath:AT2G40990"/>
<dbReference type="Araport" id="AT2G40990"/>
<dbReference type="TAIR" id="AT2G40990"/>
<dbReference type="eggNOG" id="KOG1311">
    <property type="taxonomic scope" value="Eukaryota"/>
</dbReference>
<dbReference type="HOGENOM" id="CLU_018741_7_2_1"/>
<dbReference type="InParanoid" id="O80685"/>
<dbReference type="OMA" id="ILYCFVV"/>
<dbReference type="OrthoDB" id="4096362at2759"/>
<dbReference type="BRENDA" id="2.3.1.225">
    <property type="organism ID" value="399"/>
</dbReference>
<dbReference type="PRO" id="PR:O80685"/>
<dbReference type="Proteomes" id="UP000006548">
    <property type="component" value="Chromosome 2"/>
</dbReference>
<dbReference type="ExpressionAtlas" id="O80685">
    <property type="expression patterns" value="baseline and differential"/>
</dbReference>
<dbReference type="GO" id="GO:0030659">
    <property type="term" value="C:cytoplasmic vesicle membrane"/>
    <property type="evidence" value="ECO:0007669"/>
    <property type="project" value="UniProtKB-SubCell"/>
</dbReference>
<dbReference type="GO" id="GO:0019706">
    <property type="term" value="F:protein-cysteine S-palmitoyltransferase activity"/>
    <property type="evidence" value="ECO:0007669"/>
    <property type="project" value="UniProtKB-EC"/>
</dbReference>
<dbReference type="InterPro" id="IPR001594">
    <property type="entry name" value="Palmitoyltrfase_DHHC"/>
</dbReference>
<dbReference type="InterPro" id="IPR039859">
    <property type="entry name" value="PFA4/ZDH16/20/ERF2-like"/>
</dbReference>
<dbReference type="PANTHER" id="PTHR22883:SF484">
    <property type="entry name" value="PROTEIN S-ACYLTRANSFERASE 2-RELATED"/>
    <property type="match status" value="1"/>
</dbReference>
<dbReference type="PANTHER" id="PTHR22883">
    <property type="entry name" value="ZINC FINGER DHHC DOMAIN CONTAINING PROTEIN"/>
    <property type="match status" value="1"/>
</dbReference>
<dbReference type="Pfam" id="PF01529">
    <property type="entry name" value="DHHC"/>
    <property type="match status" value="1"/>
</dbReference>
<dbReference type="PROSITE" id="PS50216">
    <property type="entry name" value="DHHC"/>
    <property type="match status" value="1"/>
</dbReference>
<feature type="chain" id="PRO_0000363592" description="Probable protein S-acyltransferase 2">
    <location>
        <begin position="1"/>
        <end position="411"/>
    </location>
</feature>
<feature type="transmembrane region" description="Helical" evidence="3">
    <location>
        <begin position="56"/>
        <end position="76"/>
    </location>
</feature>
<feature type="transmembrane region" description="Helical" evidence="3">
    <location>
        <begin position="85"/>
        <end position="105"/>
    </location>
</feature>
<feature type="transmembrane region" description="Helical" evidence="3">
    <location>
        <begin position="205"/>
        <end position="225"/>
    </location>
</feature>
<feature type="transmembrane region" description="Helical" evidence="3">
    <location>
        <begin position="245"/>
        <end position="265"/>
    </location>
</feature>
<feature type="domain" description="DHHC" evidence="4">
    <location>
        <begin position="160"/>
        <end position="210"/>
    </location>
</feature>
<feature type="active site" description="S-palmitoyl cysteine intermediate" evidence="1">
    <location>
        <position position="190"/>
    </location>
</feature>
<feature type="modified residue" description="Phosphoserine" evidence="2">
    <location>
        <position position="405"/>
    </location>
</feature>
<sequence>MGRKKSCHVHNAPSDDDIMFSQDHKPKRIYQLWPGNNRFYCGGRLVFGPDASSLLLTTAMIGGPALTFCIRMVFLIGKRYPLFHSLILLGALLLTVLDFTFLFLTSSRDPGIIPRNKEAPEAEGLDMITQSSEWVNNKLGNTKIPRTKDILVNGYTVKVKFCDTCLLYRPPRASHCSICNNCVQRFDHHCPWVGQCIALRNYPYFICFISTSTLLCLYVFVFSWVSMLEVHGKMLLMVITNDLVFVVLILYCFVVVWFVGGLTVFHLYLICTNQTTYENFRYRYDKKENPYGKGLFKNLYELFFARIPPPMINFRDWAPEEPDEEVGSIASELDRTFGPRGDKYDMEMEIGGCKNSKVGLQLHTLEYDNNNSSEETVKKKGVSEETAAFYIPGIQEPANITRNSSIDVRSR</sequence>
<gene>
    <name type="primary">PAT02</name>
    <name type="ordered locus">At2g40990</name>
    <name type="ORF">T3K9.24</name>
</gene>
<reference key="1">
    <citation type="journal article" date="1999" name="Nature">
        <title>Sequence and analysis of chromosome 2 of the plant Arabidopsis thaliana.</title>
        <authorList>
            <person name="Lin X."/>
            <person name="Kaul S."/>
            <person name="Rounsley S.D."/>
            <person name="Shea T.P."/>
            <person name="Benito M.-I."/>
            <person name="Town C.D."/>
            <person name="Fujii C.Y."/>
            <person name="Mason T.M."/>
            <person name="Bowman C.L."/>
            <person name="Barnstead M.E."/>
            <person name="Feldblyum T.V."/>
            <person name="Buell C.R."/>
            <person name="Ketchum K.A."/>
            <person name="Lee J.J."/>
            <person name="Ronning C.M."/>
            <person name="Koo H.L."/>
            <person name="Moffat K.S."/>
            <person name="Cronin L.A."/>
            <person name="Shen M."/>
            <person name="Pai G."/>
            <person name="Van Aken S."/>
            <person name="Umayam L."/>
            <person name="Tallon L.J."/>
            <person name="Gill J.E."/>
            <person name="Adams M.D."/>
            <person name="Carrera A.J."/>
            <person name="Creasy T.H."/>
            <person name="Goodman H.M."/>
            <person name="Somerville C.R."/>
            <person name="Copenhaver G.P."/>
            <person name="Preuss D."/>
            <person name="Nierman W.C."/>
            <person name="White O."/>
            <person name="Eisen J.A."/>
            <person name="Salzberg S.L."/>
            <person name="Fraser C.M."/>
            <person name="Venter J.C."/>
        </authorList>
    </citation>
    <scope>NUCLEOTIDE SEQUENCE [LARGE SCALE GENOMIC DNA]</scope>
    <source>
        <strain>cv. Columbia</strain>
    </source>
</reference>
<reference key="2">
    <citation type="journal article" date="2017" name="Plant J.">
        <title>Araport11: a complete reannotation of the Arabidopsis thaliana reference genome.</title>
        <authorList>
            <person name="Cheng C.Y."/>
            <person name="Krishnakumar V."/>
            <person name="Chan A.P."/>
            <person name="Thibaud-Nissen F."/>
            <person name="Schobel S."/>
            <person name="Town C.D."/>
        </authorList>
    </citation>
    <scope>GENOME REANNOTATION</scope>
    <source>
        <strain>cv. Columbia</strain>
    </source>
</reference>
<reference key="3">
    <citation type="book" date="2007" name="Proceedings of the 18th international conference on Arabidopsis research">
        <title>S-acylation: dynamic control of plant development and sigalling by lipid modification of proteins.</title>
        <authorList>
            <person name="Hemsley P.A."/>
            <person name="Taylor L."/>
            <person name="Grierson C.S."/>
        </authorList>
    </citation>
    <scope>GENE FAMILY</scope>
    <scope>FUNCTION</scope>
</reference>
<reference key="4">
    <citation type="journal article" date="2012" name="Plant Physiol.">
        <title>Genomics and localization of the Arabidopsis DHHC-cysteine-rich domain S-acyltransferase protein family.</title>
        <authorList>
            <person name="Batistic O."/>
        </authorList>
    </citation>
    <scope>SUBCELLULAR LOCATION</scope>
    <scope>TISSUE SPECIFICITY</scope>
    <scope>GENE FAMILY</scope>
    <scope>NOMENCLATURE</scope>
</reference>
<proteinExistence type="evidence at transcript level"/>